<organism>
    <name type="scientific">Streptococcus pyogenes serotype M18 (strain MGAS8232)</name>
    <dbReference type="NCBI Taxonomy" id="186103"/>
    <lineage>
        <taxon>Bacteria</taxon>
        <taxon>Bacillati</taxon>
        <taxon>Bacillota</taxon>
        <taxon>Bacilli</taxon>
        <taxon>Lactobacillales</taxon>
        <taxon>Streptococcaceae</taxon>
        <taxon>Streptococcus</taxon>
    </lineage>
</organism>
<name>RL6_STRP8</name>
<sequence>MSRIGNKVITMPAGVELTNNNNVITVKGPKGELTREFNKNIEIKVEGTEITVVRPNDSKEMKTIHGTTRANLNNMVVGVSEGFKKDLEMKGVGYRAQLQGTKLVLSVGKSHQDEVEAPEGITFTVANPTSISVEGINKEVVGQTAAYIRSLRSPEPYKGKGIRYVGEYVRLKEGKTGK</sequence>
<feature type="chain" id="PRO_0000260949" description="Large ribosomal subunit protein uL6">
    <location>
        <begin position="1"/>
        <end position="178"/>
    </location>
</feature>
<dbReference type="EMBL" id="AE009949">
    <property type="protein sequence ID" value="AAL96891.1"/>
    <property type="molecule type" value="Genomic_DNA"/>
</dbReference>
<dbReference type="RefSeq" id="WP_002986629.1">
    <property type="nucleotide sequence ID" value="NC_003485.1"/>
</dbReference>
<dbReference type="SMR" id="Q7CNP4"/>
<dbReference type="GeneID" id="69900041"/>
<dbReference type="KEGG" id="spm:spyM18_0067"/>
<dbReference type="HOGENOM" id="CLU_065464_1_2_9"/>
<dbReference type="GO" id="GO:0022625">
    <property type="term" value="C:cytosolic large ribosomal subunit"/>
    <property type="evidence" value="ECO:0007669"/>
    <property type="project" value="TreeGrafter"/>
</dbReference>
<dbReference type="GO" id="GO:0019843">
    <property type="term" value="F:rRNA binding"/>
    <property type="evidence" value="ECO:0007669"/>
    <property type="project" value="UniProtKB-UniRule"/>
</dbReference>
<dbReference type="GO" id="GO:0003735">
    <property type="term" value="F:structural constituent of ribosome"/>
    <property type="evidence" value="ECO:0007669"/>
    <property type="project" value="InterPro"/>
</dbReference>
<dbReference type="GO" id="GO:0002181">
    <property type="term" value="P:cytoplasmic translation"/>
    <property type="evidence" value="ECO:0007669"/>
    <property type="project" value="TreeGrafter"/>
</dbReference>
<dbReference type="FunFam" id="3.90.930.12:FF:000001">
    <property type="entry name" value="50S ribosomal protein L6"/>
    <property type="match status" value="1"/>
</dbReference>
<dbReference type="FunFam" id="3.90.930.12:FF:000002">
    <property type="entry name" value="50S ribosomal protein L6"/>
    <property type="match status" value="1"/>
</dbReference>
<dbReference type="Gene3D" id="3.90.930.12">
    <property type="entry name" value="Ribosomal protein L6, alpha-beta domain"/>
    <property type="match status" value="2"/>
</dbReference>
<dbReference type="HAMAP" id="MF_01365_B">
    <property type="entry name" value="Ribosomal_uL6_B"/>
    <property type="match status" value="1"/>
</dbReference>
<dbReference type="InterPro" id="IPR000702">
    <property type="entry name" value="Ribosomal_uL6-like"/>
</dbReference>
<dbReference type="InterPro" id="IPR036789">
    <property type="entry name" value="Ribosomal_uL6-like_a/b-dom_sf"/>
</dbReference>
<dbReference type="InterPro" id="IPR020040">
    <property type="entry name" value="Ribosomal_uL6_a/b-dom"/>
</dbReference>
<dbReference type="InterPro" id="IPR019906">
    <property type="entry name" value="Ribosomal_uL6_bac-type"/>
</dbReference>
<dbReference type="InterPro" id="IPR002358">
    <property type="entry name" value="Ribosomal_uL6_CS"/>
</dbReference>
<dbReference type="NCBIfam" id="TIGR03654">
    <property type="entry name" value="L6_bact"/>
    <property type="match status" value="1"/>
</dbReference>
<dbReference type="PANTHER" id="PTHR11655">
    <property type="entry name" value="60S/50S RIBOSOMAL PROTEIN L6/L9"/>
    <property type="match status" value="1"/>
</dbReference>
<dbReference type="PANTHER" id="PTHR11655:SF14">
    <property type="entry name" value="LARGE RIBOSOMAL SUBUNIT PROTEIN UL6M"/>
    <property type="match status" value="1"/>
</dbReference>
<dbReference type="Pfam" id="PF00347">
    <property type="entry name" value="Ribosomal_L6"/>
    <property type="match status" value="2"/>
</dbReference>
<dbReference type="PIRSF" id="PIRSF002162">
    <property type="entry name" value="Ribosomal_L6"/>
    <property type="match status" value="1"/>
</dbReference>
<dbReference type="PRINTS" id="PR00059">
    <property type="entry name" value="RIBOSOMALL6"/>
</dbReference>
<dbReference type="SUPFAM" id="SSF56053">
    <property type="entry name" value="Ribosomal protein L6"/>
    <property type="match status" value="2"/>
</dbReference>
<dbReference type="PROSITE" id="PS00525">
    <property type="entry name" value="RIBOSOMAL_L6_1"/>
    <property type="match status" value="1"/>
</dbReference>
<protein>
    <recommendedName>
        <fullName evidence="1">Large ribosomal subunit protein uL6</fullName>
    </recommendedName>
    <alternativeName>
        <fullName evidence="2">50S ribosomal protein L6</fullName>
    </alternativeName>
</protein>
<keyword id="KW-0687">Ribonucleoprotein</keyword>
<keyword id="KW-0689">Ribosomal protein</keyword>
<keyword id="KW-0694">RNA-binding</keyword>
<keyword id="KW-0699">rRNA-binding</keyword>
<accession>Q7CNP4</accession>
<proteinExistence type="inferred from homology"/>
<comment type="function">
    <text evidence="1">This protein binds to the 23S rRNA, and is important in its secondary structure. It is located near the subunit interface in the base of the L7/L12 stalk, and near the tRNA binding site of the peptidyltransferase center.</text>
</comment>
<comment type="subunit">
    <text evidence="1">Part of the 50S ribosomal subunit.</text>
</comment>
<comment type="similarity">
    <text evidence="1">Belongs to the universal ribosomal protein uL6 family.</text>
</comment>
<evidence type="ECO:0000255" key="1">
    <source>
        <dbReference type="HAMAP-Rule" id="MF_01365"/>
    </source>
</evidence>
<evidence type="ECO:0000305" key="2"/>
<reference key="1">
    <citation type="journal article" date="2002" name="Proc. Natl. Acad. Sci. U.S.A.">
        <title>Genome sequence and comparative microarray analysis of serotype M18 group A Streptococcus strains associated with acute rheumatic fever outbreaks.</title>
        <authorList>
            <person name="Smoot J.C."/>
            <person name="Barbian K.D."/>
            <person name="Van Gompel J.J."/>
            <person name="Smoot L.M."/>
            <person name="Chaussee M.S."/>
            <person name="Sylva G.L."/>
            <person name="Sturdevant D.E."/>
            <person name="Ricklefs S.M."/>
            <person name="Porcella S.F."/>
            <person name="Parkins L.D."/>
            <person name="Beres S.B."/>
            <person name="Campbell D.S."/>
            <person name="Smith T.M."/>
            <person name="Zhang Q."/>
            <person name="Kapur V."/>
            <person name="Daly J.A."/>
            <person name="Veasy L.G."/>
            <person name="Musser J.M."/>
        </authorList>
    </citation>
    <scope>NUCLEOTIDE SEQUENCE [LARGE SCALE GENOMIC DNA]</scope>
    <source>
        <strain>MGAS8232</strain>
    </source>
</reference>
<gene>
    <name evidence="1" type="primary">rplF</name>
    <name type="ordered locus">spyM18_0067</name>
</gene>